<evidence type="ECO:0000255" key="1">
    <source>
        <dbReference type="HAMAP-Rule" id="MF_00652"/>
    </source>
</evidence>
<sequence length="249" mass="28999">MKIIISPARTMQVDTDSLLYKDLPEFLQQTKDILGWMRSLSYDELHKVWGNCSSRLAMKNYQWLQQMDLQRKLTPAIIAFTGLQYQYMAPSVFSEDGLKYVQDNLRILSGFYGILRPFDGIIPYRLGMGDMAPVNGYKNLYDFWGEQLYHELYKNNDLVISLASVEYEKAITPYLQTQDRFIKCIFGEEINGKIKQKATLAKMARGNMVRYLAENQIQTIEGVKQFNIGGYRFREDLSTDEKLVFELVK</sequence>
<gene>
    <name type="ordered locus">LAR_0480</name>
</gene>
<comment type="similarity">
    <text evidence="1">Belongs to the UPF0246 family.</text>
</comment>
<feature type="chain" id="PRO_1000131127" description="UPF0246 protein LAR_0480">
    <location>
        <begin position="1"/>
        <end position="249"/>
    </location>
</feature>
<protein>
    <recommendedName>
        <fullName evidence="1">UPF0246 protein LAR_0480</fullName>
    </recommendedName>
</protein>
<proteinExistence type="inferred from homology"/>
<accession>B2G6B4</accession>
<reference key="1">
    <citation type="journal article" date="2008" name="DNA Res.">
        <title>Comparative genome analysis of Lactobacillus reuteri and Lactobacillus fermentum reveal a genomic island for reuterin and cobalamin production.</title>
        <authorList>
            <person name="Morita H."/>
            <person name="Toh H."/>
            <person name="Fukuda S."/>
            <person name="Horikawa H."/>
            <person name="Oshima K."/>
            <person name="Suzuki T."/>
            <person name="Murakami M."/>
            <person name="Hisamatsu S."/>
            <person name="Kato Y."/>
            <person name="Takizawa T."/>
            <person name="Fukuoka H."/>
            <person name="Yoshimura T."/>
            <person name="Itoh K."/>
            <person name="O'Sullivan D.J."/>
            <person name="McKay L.L."/>
            <person name="Ohno H."/>
            <person name="Kikuchi J."/>
            <person name="Masaoka T."/>
            <person name="Hattori M."/>
        </authorList>
    </citation>
    <scope>NUCLEOTIDE SEQUENCE [LARGE SCALE GENOMIC DNA]</scope>
    <source>
        <strain>JCM 1112</strain>
    </source>
</reference>
<organism>
    <name type="scientific">Limosilactobacillus reuteri subsp. reuteri (strain JCM 1112)</name>
    <name type="common">Lactobacillus reuteri</name>
    <dbReference type="NCBI Taxonomy" id="557433"/>
    <lineage>
        <taxon>Bacteria</taxon>
        <taxon>Bacillati</taxon>
        <taxon>Bacillota</taxon>
        <taxon>Bacilli</taxon>
        <taxon>Lactobacillales</taxon>
        <taxon>Lactobacillaceae</taxon>
        <taxon>Limosilactobacillus</taxon>
    </lineage>
</organism>
<name>Y480_LIMRJ</name>
<dbReference type="EMBL" id="AP007281">
    <property type="protein sequence ID" value="BAG24996.1"/>
    <property type="molecule type" value="Genomic_DNA"/>
</dbReference>
<dbReference type="SMR" id="B2G6B4"/>
<dbReference type="KEGG" id="lrf:LAR_0480"/>
<dbReference type="HOGENOM" id="CLU_061989_1_0_9"/>
<dbReference type="GO" id="GO:0005829">
    <property type="term" value="C:cytosol"/>
    <property type="evidence" value="ECO:0007669"/>
    <property type="project" value="TreeGrafter"/>
</dbReference>
<dbReference type="GO" id="GO:0033194">
    <property type="term" value="P:response to hydroperoxide"/>
    <property type="evidence" value="ECO:0007669"/>
    <property type="project" value="TreeGrafter"/>
</dbReference>
<dbReference type="HAMAP" id="MF_00652">
    <property type="entry name" value="UPF0246"/>
    <property type="match status" value="1"/>
</dbReference>
<dbReference type="InterPro" id="IPR005583">
    <property type="entry name" value="YaaA"/>
</dbReference>
<dbReference type="NCBIfam" id="NF002543">
    <property type="entry name" value="PRK02101.1-4"/>
    <property type="match status" value="1"/>
</dbReference>
<dbReference type="PANTHER" id="PTHR30283:SF4">
    <property type="entry name" value="PEROXIDE STRESS RESISTANCE PROTEIN YAAA"/>
    <property type="match status" value="1"/>
</dbReference>
<dbReference type="PANTHER" id="PTHR30283">
    <property type="entry name" value="PEROXIDE STRESS RESPONSE PROTEIN YAAA"/>
    <property type="match status" value="1"/>
</dbReference>
<dbReference type="Pfam" id="PF03883">
    <property type="entry name" value="H2O2_YaaD"/>
    <property type="match status" value="1"/>
</dbReference>